<keyword id="KW-0002">3D-structure</keyword>
<keyword id="KW-1185">Reference proteome</keyword>
<keyword id="KW-0732">Signal</keyword>
<keyword id="KW-0762">Sugar transport</keyword>
<keyword id="KW-0813">Transport</keyword>
<evidence type="ECO:0000255" key="1">
    <source>
        <dbReference type="PROSITE-ProRule" id="PRU00303"/>
    </source>
</evidence>
<evidence type="ECO:0000256" key="2">
    <source>
        <dbReference type="SAM" id="MobiDB-lite"/>
    </source>
</evidence>
<evidence type="ECO:0000305" key="3"/>
<evidence type="ECO:0007829" key="4">
    <source>
        <dbReference type="PDB" id="1ELJ"/>
    </source>
</evidence>
<accession>P58300</accession>
<reference key="1">
    <citation type="journal article" date="1999" name="Genetics">
        <title>Divergence of the hyperthermophilic archaea Pyrococcus furiosus and P. horikoshii inferred from complete genomic sequences.</title>
        <authorList>
            <person name="Maeder D.L."/>
            <person name="Weiss R.B."/>
            <person name="Dunn D.M."/>
            <person name="Cherry J.L."/>
            <person name="Gonzalez J.M."/>
            <person name="DiRuggiero J."/>
            <person name="Robb F.T."/>
        </authorList>
    </citation>
    <scope>NUCLEOTIDE SEQUENCE [LARGE SCALE GENOMIC DNA]</scope>
    <source>
        <strain>ATCC 43587 / DSM 3638 / JCM 8422 / Vc1</strain>
    </source>
</reference>
<reference key="2">
    <citation type="journal article" date="2001" name="J. Mol. Biol.">
        <title>Structural basis for oligosaccharide recognition by Pyrococcus furiosus maltodextrin-binding protein.</title>
        <authorList>
            <person name="Evdokimov A.G."/>
            <person name="Anderson D.E."/>
            <person name="Routzahn K.M."/>
            <person name="Waugh D.S."/>
        </authorList>
    </citation>
    <scope>X-RAY CRYSTALLOGRAPHY (1.85 ANGSTROMS) OF 59-434</scope>
</reference>
<sequence>MRRATYAFALLAILVLGVVASGCIGGGTTTPTQTSPATQPTTTQTPTQTETQAVECGSGKVVIWHAMQPNELEVFQSLAEEYMALCPEVEIVFEQKPNLEDALKAAIPTGQGPDLFIWAHDWIGKFAEAGLLEPIDEYVTEDLLNEFAPMAQDAMQYKGHYYALPFAAETVAIIYNKEMVSEPPKTFDEMKAIMEKYYDPANEKYGIAWPINAYFISAIAQAFGGYYFDDKTEQPGLDKPETIEGFKFFFTEIWPYMAPTGDYNTQQSIFLEGRAPMMVNGPWSINDVKKAGINFGVVPLPPIIKDGKEYWPRPYGGVKLIYFAAGIKNKDAAWKFAKWLTTSEESIKTLALELGYIPVLTKVLDDPEIKNDPVIYGFGQAVQHAYLMPKSPKMSAVWGGVDGAINEILQDPQNADIEGILKKYQQEILNNMQG</sequence>
<name>MALE_PYRFU</name>
<organism>
    <name type="scientific">Pyrococcus furiosus (strain ATCC 43587 / DSM 3638 / JCM 8422 / Vc1)</name>
    <dbReference type="NCBI Taxonomy" id="186497"/>
    <lineage>
        <taxon>Archaea</taxon>
        <taxon>Methanobacteriati</taxon>
        <taxon>Methanobacteriota</taxon>
        <taxon>Thermococci</taxon>
        <taxon>Thermococcales</taxon>
        <taxon>Thermococcaceae</taxon>
        <taxon>Pyrococcus</taxon>
    </lineage>
</organism>
<dbReference type="EMBL" id="AE009950">
    <property type="protein sequence ID" value="AAL82062.1"/>
    <property type="molecule type" value="Genomic_DNA"/>
</dbReference>
<dbReference type="RefSeq" id="WP_011013078.1">
    <property type="nucleotide sequence ID" value="NZ_CP023154.1"/>
</dbReference>
<dbReference type="PDB" id="1ELJ">
    <property type="method" value="X-ray"/>
    <property type="resolution" value="1.85 A"/>
    <property type="chains" value="A=59-434"/>
</dbReference>
<dbReference type="PDBsum" id="1ELJ"/>
<dbReference type="SMR" id="P58300"/>
<dbReference type="STRING" id="186497.PF1938"/>
<dbReference type="TCDB" id="3.A.1.1.16">
    <property type="family name" value="the atp-binding cassette (abc) superfamily"/>
</dbReference>
<dbReference type="PaxDb" id="186497-PF1938"/>
<dbReference type="KEGG" id="pfu:PF1938"/>
<dbReference type="PATRIC" id="fig|186497.12.peg.2010"/>
<dbReference type="eggNOG" id="arCOG00154">
    <property type="taxonomic scope" value="Archaea"/>
</dbReference>
<dbReference type="HOGENOM" id="CLU_031285_17_1_2"/>
<dbReference type="OrthoDB" id="42146at2157"/>
<dbReference type="PhylomeDB" id="P58300"/>
<dbReference type="EvolutionaryTrace" id="P58300"/>
<dbReference type="Proteomes" id="UP000001013">
    <property type="component" value="Chromosome"/>
</dbReference>
<dbReference type="GO" id="GO:0055052">
    <property type="term" value="C:ATP-binding cassette (ABC) transporter complex, substrate-binding subunit-containing"/>
    <property type="evidence" value="ECO:0007669"/>
    <property type="project" value="TreeGrafter"/>
</dbReference>
<dbReference type="GO" id="GO:0015144">
    <property type="term" value="F:carbohydrate transmembrane transporter activity"/>
    <property type="evidence" value="ECO:0007669"/>
    <property type="project" value="InterPro"/>
</dbReference>
<dbReference type="GO" id="GO:1901982">
    <property type="term" value="F:maltose binding"/>
    <property type="evidence" value="ECO:0007669"/>
    <property type="project" value="TreeGrafter"/>
</dbReference>
<dbReference type="GO" id="GO:0042956">
    <property type="term" value="P:maltodextrin transmembrane transport"/>
    <property type="evidence" value="ECO:0007669"/>
    <property type="project" value="TreeGrafter"/>
</dbReference>
<dbReference type="GO" id="GO:0015768">
    <property type="term" value="P:maltose transport"/>
    <property type="evidence" value="ECO:0007669"/>
    <property type="project" value="TreeGrafter"/>
</dbReference>
<dbReference type="CDD" id="cd13657">
    <property type="entry name" value="PBP2_Maltodextrin"/>
    <property type="match status" value="1"/>
</dbReference>
<dbReference type="Gene3D" id="3.40.190.10">
    <property type="entry name" value="Periplasmic binding protein-like II"/>
    <property type="match status" value="2"/>
</dbReference>
<dbReference type="InterPro" id="IPR006060">
    <property type="entry name" value="Maltose/Cyclodextrin-bd"/>
</dbReference>
<dbReference type="InterPro" id="IPR006059">
    <property type="entry name" value="SBP"/>
</dbReference>
<dbReference type="InterPro" id="IPR006061">
    <property type="entry name" value="SBP_1_CS"/>
</dbReference>
<dbReference type="PANTHER" id="PTHR30061">
    <property type="entry name" value="MALTOSE-BINDING PERIPLASMIC PROTEIN"/>
    <property type="match status" value="1"/>
</dbReference>
<dbReference type="PANTHER" id="PTHR30061:SF50">
    <property type="entry name" value="MALTOSE_MALTODEXTRIN-BINDING PERIPLASMIC PROTEIN"/>
    <property type="match status" value="1"/>
</dbReference>
<dbReference type="Pfam" id="PF13416">
    <property type="entry name" value="SBP_bac_8"/>
    <property type="match status" value="1"/>
</dbReference>
<dbReference type="PRINTS" id="PR00181">
    <property type="entry name" value="MALTOSEBP"/>
</dbReference>
<dbReference type="SUPFAM" id="SSF53850">
    <property type="entry name" value="Periplasmic binding protein-like II"/>
    <property type="match status" value="1"/>
</dbReference>
<dbReference type="PROSITE" id="PS51257">
    <property type="entry name" value="PROKAR_LIPOPROTEIN"/>
    <property type="match status" value="1"/>
</dbReference>
<dbReference type="PROSITE" id="PS01037">
    <property type="entry name" value="SBP_BACTERIAL_1"/>
    <property type="match status" value="1"/>
</dbReference>
<comment type="function">
    <text>Involved in an abc transport system for maltotriose. Binds maltotriose much more tightly than maltose.</text>
</comment>
<comment type="similarity">
    <text evidence="3">Belongs to the bacterial solute-binding protein 1 family.</text>
</comment>
<feature type="signal peptide" evidence="1">
    <location>
        <begin position="1"/>
        <end position="20"/>
    </location>
</feature>
<feature type="chain" id="PRO_0000031701" description="Maltotriose-binding protein">
    <location>
        <begin position="21"/>
        <end position="434"/>
    </location>
</feature>
<feature type="region of interest" description="Disordered" evidence="2">
    <location>
        <begin position="28"/>
        <end position="52"/>
    </location>
</feature>
<feature type="compositionally biased region" description="Low complexity" evidence="2">
    <location>
        <begin position="29"/>
        <end position="52"/>
    </location>
</feature>
<feature type="strand" evidence="4">
    <location>
        <begin position="59"/>
        <end position="65"/>
    </location>
</feature>
<feature type="helix" evidence="4">
    <location>
        <begin position="69"/>
        <end position="85"/>
    </location>
</feature>
<feature type="strand" evidence="4">
    <location>
        <begin position="89"/>
        <end position="95"/>
    </location>
</feature>
<feature type="helix" evidence="4">
    <location>
        <begin position="99"/>
        <end position="106"/>
    </location>
</feature>
<feature type="turn" evidence="4">
    <location>
        <begin position="107"/>
        <end position="110"/>
    </location>
</feature>
<feature type="strand" evidence="4">
    <location>
        <begin position="114"/>
        <end position="119"/>
    </location>
</feature>
<feature type="helix" evidence="4">
    <location>
        <begin position="120"/>
        <end position="122"/>
    </location>
</feature>
<feature type="helix" evidence="4">
    <location>
        <begin position="123"/>
        <end position="128"/>
    </location>
</feature>
<feature type="turn" evidence="4">
    <location>
        <begin position="136"/>
        <end position="138"/>
    </location>
</feature>
<feature type="helix" evidence="4">
    <location>
        <begin position="141"/>
        <end position="144"/>
    </location>
</feature>
<feature type="helix" evidence="4">
    <location>
        <begin position="149"/>
        <end position="154"/>
    </location>
</feature>
<feature type="strand" evidence="4">
    <location>
        <begin position="163"/>
        <end position="169"/>
    </location>
</feature>
<feature type="strand" evidence="4">
    <location>
        <begin position="172"/>
        <end position="176"/>
    </location>
</feature>
<feature type="turn" evidence="4">
    <location>
        <begin position="177"/>
        <end position="179"/>
    </location>
</feature>
<feature type="helix" evidence="4">
    <location>
        <begin position="187"/>
        <end position="197"/>
    </location>
</feature>
<feature type="helix" evidence="4">
    <location>
        <begin position="200"/>
        <end position="202"/>
    </location>
</feature>
<feature type="helix" evidence="4">
    <location>
        <begin position="213"/>
        <end position="220"/>
    </location>
</feature>
<feature type="turn" evidence="4">
    <location>
        <begin position="221"/>
        <end position="223"/>
    </location>
</feature>
<feature type="strand" evidence="4">
    <location>
        <begin position="227"/>
        <end position="229"/>
    </location>
</feature>
<feature type="turn" evidence="4">
    <location>
        <begin position="230"/>
        <end position="233"/>
    </location>
</feature>
<feature type="helix" evidence="4">
    <location>
        <begin position="240"/>
        <end position="252"/>
    </location>
</feature>
<feature type="helix" evidence="4">
    <location>
        <begin position="254"/>
        <end position="256"/>
    </location>
</feature>
<feature type="helix" evidence="4">
    <location>
        <begin position="263"/>
        <end position="271"/>
    </location>
</feature>
<feature type="strand" evidence="4">
    <location>
        <begin position="274"/>
        <end position="280"/>
    </location>
</feature>
<feature type="helix" evidence="4">
    <location>
        <begin position="282"/>
        <end position="284"/>
    </location>
</feature>
<feature type="helix" evidence="4">
    <location>
        <begin position="285"/>
        <end position="290"/>
    </location>
</feature>
<feature type="strand" evidence="4">
    <location>
        <begin position="295"/>
        <end position="298"/>
    </location>
</feature>
<feature type="strand" evidence="4">
    <location>
        <begin position="303"/>
        <end position="305"/>
    </location>
</feature>
<feature type="strand" evidence="4">
    <location>
        <begin position="308"/>
        <end position="310"/>
    </location>
</feature>
<feature type="strand" evidence="4">
    <location>
        <begin position="315"/>
        <end position="324"/>
    </location>
</feature>
<feature type="helix" evidence="4">
    <location>
        <begin position="330"/>
        <end position="342"/>
    </location>
</feature>
<feature type="helix" evidence="4">
    <location>
        <begin position="344"/>
        <end position="354"/>
    </location>
</feature>
<feature type="helix" evidence="4">
    <location>
        <begin position="361"/>
        <end position="365"/>
    </location>
</feature>
<feature type="helix" evidence="4">
    <location>
        <begin position="367"/>
        <end position="370"/>
    </location>
</feature>
<feature type="helix" evidence="4">
    <location>
        <begin position="373"/>
        <end position="383"/>
    </location>
</feature>
<feature type="helix" evidence="4">
    <location>
        <begin position="394"/>
        <end position="409"/>
    </location>
</feature>
<feature type="turn" evidence="4">
    <location>
        <begin position="412"/>
        <end position="414"/>
    </location>
</feature>
<feature type="helix" evidence="4">
    <location>
        <begin position="417"/>
        <end position="431"/>
    </location>
</feature>
<gene>
    <name type="primary">malE</name>
    <name type="ordered locus">PF1938</name>
</gene>
<proteinExistence type="evidence at protein level"/>
<protein>
    <recommendedName>
        <fullName>Maltotriose-binding protein</fullName>
    </recommendedName>
    <alternativeName>
        <fullName>MMBP</fullName>
    </alternativeName>
    <alternativeName>
        <fullName>Maltodextrin-binding protein</fullName>
    </alternativeName>
</protein>